<reference key="1">
    <citation type="journal article" date="2009" name="PLoS Biol.">
        <title>Lineage-specific biology revealed by a finished genome assembly of the mouse.</title>
        <authorList>
            <person name="Church D.M."/>
            <person name="Goodstadt L."/>
            <person name="Hillier L.W."/>
            <person name="Zody M.C."/>
            <person name="Goldstein S."/>
            <person name="She X."/>
            <person name="Bult C.J."/>
            <person name="Agarwala R."/>
            <person name="Cherry J.L."/>
            <person name="DiCuccio M."/>
            <person name="Hlavina W."/>
            <person name="Kapustin Y."/>
            <person name="Meric P."/>
            <person name="Maglott D."/>
            <person name="Birtle Z."/>
            <person name="Marques A.C."/>
            <person name="Graves T."/>
            <person name="Zhou S."/>
            <person name="Teague B."/>
            <person name="Potamousis K."/>
            <person name="Churas C."/>
            <person name="Place M."/>
            <person name="Herschleb J."/>
            <person name="Runnheim R."/>
            <person name="Forrest D."/>
            <person name="Amos-Landgraf J."/>
            <person name="Schwartz D.C."/>
            <person name="Cheng Z."/>
            <person name="Lindblad-Toh K."/>
            <person name="Eichler E.E."/>
            <person name="Ponting C.P."/>
        </authorList>
    </citation>
    <scope>NUCLEOTIDE SEQUENCE [LARGE SCALE GENOMIC DNA]</scope>
    <source>
        <strain>C57BL/6J</strain>
    </source>
</reference>
<reference key="2">
    <citation type="journal article" date="1996" name="Genomics">
        <title>The mouse DNA binding protein Rc for the kappa B motif of transcription and for the V(D)J recombination signal sequences contains composite DNA-protein interaction domains and belongs to a new family of large transcriptional proteins.</title>
        <authorList>
            <person name="Wu L.-C."/>
            <person name="Liu Y."/>
            <person name="Strandtmann J."/>
            <person name="Mak C.-H."/>
            <person name="Lee B."/>
            <person name="Li Z."/>
            <person name="Yu C.Y."/>
        </authorList>
    </citation>
    <scope>NUCLEOTIDE SEQUENCE [MRNA] OF 1-2341</scope>
    <scope>DOMAIN</scope>
    <scope>FUNCTION</scope>
    <scope>TISSUE SPECIFICITY</scope>
    <source>
        <strain>BALB/cJ</strain>
        <tissue>Brain</tissue>
    </source>
</reference>
<reference key="3">
    <citation type="journal article" date="2004" name="DNA Res.">
        <title>Prediction of the coding sequences of mouse homologues of KIAA gene: IV. The complete nucleotide sequences of 500 mouse KIAA-homologous cDNAs identified by screening of terminal sequences of cDNA clones randomly sampled from size-fractionated libraries.</title>
        <authorList>
            <person name="Okazaki N."/>
            <person name="Kikuno R."/>
            <person name="Ohara R."/>
            <person name="Inamoto S."/>
            <person name="Koseki H."/>
            <person name="Hiraoka S."/>
            <person name="Saga Y."/>
            <person name="Seino S."/>
            <person name="Nishimura M."/>
            <person name="Kaisho T."/>
            <person name="Hoshino K."/>
            <person name="Kitamura H."/>
            <person name="Nagase T."/>
            <person name="Ohara O."/>
            <person name="Koga H."/>
        </authorList>
    </citation>
    <scope>NUCLEOTIDE SEQUENCE [MRNA] OF 1281-2348</scope>
    <source>
        <tissue>Thymus</tissue>
    </source>
</reference>
<reference key="4">
    <citation type="journal article" date="1993" name="Nucleic Acids Res.">
        <title>Molecular cloning of a zinc finger protein which binds to the heptamer of the signal sequence for V(D)J recombination.</title>
        <authorList>
            <person name="Wu L.-C."/>
            <person name="Mak C.-H."/>
            <person name="Dear N."/>
            <person name="Boehm T."/>
            <person name="Foroni L."/>
            <person name="Rabbitts T.H."/>
        </authorList>
    </citation>
    <scope>NUCLEOTIDE SEQUENCE [MRNA] OF 1497-2295</scope>
    <scope>FUNCTION</scope>
    <scope>TISSUE SPECIFICITY</scope>
    <scope>DEVELOPMENTAL STAGE</scope>
    <scope>DOMAIN</scope>
    <scope>REPEAT</scope>
</reference>
<reference key="5">
    <citation type="journal article" date="1999" name="Nucleic Acids Res.">
        <title>Regulation by phosphorylation of the zinc finger protein KRC that binds the kappaB motif and V(D)J recombination signal sequences.</title>
        <authorList>
            <person name="Bachmeyer C."/>
            <person name="Mak C.H."/>
            <person name="Yu C.Y."/>
            <person name="Wu L.-C."/>
        </authorList>
    </citation>
    <scope>PHOSPHORYLATION</scope>
</reference>
<reference key="6">
    <citation type="journal article" date="2000" name="Exp. Cell Res.">
        <title>Downregulation of KRC induces proliferation, anchorage independence, and mitotic cell death in HeLa cells.</title>
        <authorList>
            <person name="Allen C.E."/>
            <person name="Wu L.-C."/>
        </authorList>
    </citation>
    <scope>FUNCTION</scope>
</reference>
<reference key="7">
    <citation type="journal article" date="2000" name="J. Biol. Chem.">
        <title>The kappaB and V(D)J recombination signal sequence binding protein KRC regulates transcription of the mouse metastasis-associated gene S100A4/mts1.</title>
        <authorList>
            <person name="Hjelmsoe I."/>
            <person name="Allen C.E."/>
            <person name="Cohn M.A."/>
            <person name="Tulchinsky E.M."/>
            <person name="Wu L.-C."/>
        </authorList>
    </citation>
    <scope>FUNCTION</scope>
</reference>
<reference key="8">
    <citation type="journal article" date="2002" name="BMC Immunol.">
        <title>The kappa B transcriptional enhancer motif and signal sequences of V(D)J recombination are targets for the zinc finger protein HIVEP3/KRC: a site selection amplification binding study.</title>
        <authorList>
            <person name="Allen C.E."/>
            <person name="Mak C.-H."/>
            <person name="Wu L.-C."/>
        </authorList>
    </citation>
    <scope>FUNCTION</scope>
    <scope>DOMAIN ZAS</scope>
</reference>
<reference key="9">
    <citation type="journal article" date="2002" name="Mol. Cell">
        <title>A mammalian homolog of Drosophila schnurri, KRC, regulates TNF receptor-driven responses and interacts with TRAF2.</title>
        <authorList>
            <person name="Oukka M."/>
            <person name="Kim S.T."/>
            <person name="Lugo G."/>
            <person name="Sun J."/>
            <person name="Wu L.-C."/>
            <person name="Glimcher L.H."/>
        </authorList>
    </citation>
    <scope>SUBCELLULAR LOCATION</scope>
    <scope>FUNCTION</scope>
    <scope>INTERACTION WITH TRAF1 AND TRAF2</scope>
    <scope>REGION</scope>
</reference>
<reference key="10">
    <citation type="journal article" date="2002" name="Genesis">
        <title>Embryonic expression and regulation of the large zinc finger protein KRC.</title>
        <authorList>
            <person name="Hicar M.D."/>
            <person name="Robinson M.L."/>
            <person name="Wu L.-C."/>
        </authorList>
    </citation>
    <scope>FUNCTION</scope>
    <scope>INDUCTION</scope>
    <scope>DEVELOPMENTAL STAGE</scope>
</reference>
<reference key="11">
    <citation type="journal article" date="2003" name="Proc. Natl. Acad. Sci. U.S.A.">
        <title>Inhibition of NF-kappaB by ZAS3, a zinc-finger protein that also binds to the kappaB motif.</title>
        <authorList>
            <person name="Hong J.W."/>
            <person name="Allen C.E."/>
            <person name="Wu L.-C."/>
        </authorList>
    </citation>
    <scope>FUNCTION</scope>
    <scope>TISSUE SPECIFICITY</scope>
</reference>
<reference key="12">
    <citation type="journal article" date="2004" name="J. Exp. Med.">
        <title>Schnurri-3 (KRC) interacts with c-Jun to regulate the IL-2 gene in T cells.</title>
        <authorList>
            <person name="Oukka M."/>
            <person name="Wein M.N."/>
            <person name="Glimcher L.H."/>
        </authorList>
    </citation>
    <scope>FUNCTION</scope>
    <scope>INTERACTION WITH JUN</scope>
    <scope>INDUCTION</scope>
</reference>
<reference key="13">
    <citation type="journal article" date="2005" name="Biochim. Biophys. Acta">
        <title>Structural characterization of the gene encoding the large zinc finger protein ZAS3: implication to the origin of multiple promoters in eukaryotic genes.</title>
        <authorList>
            <person name="Hong J.-W."/>
            <person name="Wu L.-C."/>
        </authorList>
    </citation>
    <scope>ALTERNATIVE PROMOTER USAGE</scope>
</reference>
<reference key="14">
    <citation type="journal article" date="2006" name="Science">
        <title>Regulation of adult bone mass by the zinc finger adapter protein Schnurri-3.</title>
        <authorList>
            <person name="Jones D.C."/>
            <person name="Wein M.N."/>
            <person name="Oukka M."/>
            <person name="Hofstaetter J.G."/>
            <person name="Glimcher M.J."/>
            <person name="Glimcher L.H."/>
        </authorList>
    </citation>
    <scope>DISRUPTION PHENOTYPE</scope>
    <scope>TISSUE SPECIFICITY</scope>
    <scope>INTERACTION WITH RUNX2 AND WWP1</scope>
</reference>
<reference key="15">
    <citation type="journal article" date="2010" name="Cell">
        <title>A tissue-specific atlas of mouse protein phosphorylation and expression.</title>
        <authorList>
            <person name="Huttlin E.L."/>
            <person name="Jedrychowski M.P."/>
            <person name="Elias J.E."/>
            <person name="Goswami T."/>
            <person name="Rad R."/>
            <person name="Beausoleil S.A."/>
            <person name="Villen J."/>
            <person name="Haas W."/>
            <person name="Sowa M.E."/>
            <person name="Gygi S.P."/>
        </authorList>
    </citation>
    <scope>IDENTIFICATION BY MASS SPECTROMETRY [LARGE SCALE ANALYSIS]</scope>
    <source>
        <tissue>Brain</tissue>
        <tissue>Lung</tissue>
    </source>
</reference>
<accession>A2A884</accession>
<accession>A2MZW0</accession>
<accession>Q69ZG6</accession>
<accession>Q6SNP9</accession>
<protein>
    <recommendedName>
        <fullName>Transcription factor HIVEP3</fullName>
    </recommendedName>
    <alternativeName>
        <fullName>Human immunodeficiency virus type I enhancer-binding protein 3 homolog</fullName>
    </alternativeName>
    <alternativeName>
        <fullName>KB-binding and recognition component</fullName>
    </alternativeName>
    <alternativeName>
        <fullName>Kappa-B and V(D)J recombination signal sequences-binding protein</fullName>
    </alternativeName>
    <alternativeName>
        <fullName>Kappa-binding protein 1</fullName>
        <shortName>KBP-1</shortName>
    </alternativeName>
    <alternativeName>
        <fullName>Recombinant component</fullName>
    </alternativeName>
    <alternativeName>
        <fullName>Schnurri-3</fullName>
    </alternativeName>
    <alternativeName>
        <fullName>Zinc finger protein ZAS3</fullName>
    </alternativeName>
</protein>
<keyword id="KW-0175">Coiled coil</keyword>
<keyword id="KW-0963">Cytoplasm</keyword>
<keyword id="KW-0479">Metal-binding</keyword>
<keyword id="KW-0539">Nucleus</keyword>
<keyword id="KW-0597">Phosphoprotein</keyword>
<keyword id="KW-1185">Reference proteome</keyword>
<keyword id="KW-0677">Repeat</keyword>
<keyword id="KW-0804">Transcription</keyword>
<keyword id="KW-0805">Transcription regulation</keyword>
<keyword id="KW-0862">Zinc</keyword>
<keyword id="KW-0863">Zinc-finger</keyword>
<sequence>MDPDQSIKGTKKADGSPRKRLTKGEAIQTSVSSSAPYPGSGTTAPSESATQELLATQPFSGPSQEKTGQQQKPARRPSIEASVHISQLPQHPLTPAFMSPGKPEHLLEGSTWQLVDPMRPGPSGSFVAPGLHPQSQLLPSHASILPPEELPGIPKVFVPRPSQVSLKPAEEAHKKERKPQKPGKYICQYCSRPCAKPSVLQKHIRSHTGERPYPCGPCGFSFKTKSNLYKHRKSHAHRIKAGLASGSSSEMYPPGLEMERIPGEEFEEPTEGESTDSEEETGAASGPSTDVLPKPKHPLLSSSLYSSGSHGSSQERCSLSQSSTGPSLEDPAPFAEASSEHPLSHKPEDTHTIKQKLALRLSERKKLIEEQTFLSPGSKGSTESGYFSRSESAEQQVSPPNTNAKSYAEIIFGKCGRIGQRTSMLASTSTQPLLPLSSEDKPSLVPLSVPRTQVIEHITKLITINEAVVDTSEIDSVKPRRSSLTRRSSVESPKSSLYRDSLSSHGEKTKQEQSLLSLQHPPSSTHPVPLLRSHSMPSAACTISTHHHTFRGSYSFDDHVADPEVPSRNTPVFTSHPRMLKRQPAIELPLGGEYSSEEPGPSSKDPTSKPSDEPEPKESDLTKKTKKGFKTKGANYECTICGARYKKRDNYEAHKKYYCSELQITKAHSVGAHEVEKTQAEPEPWSQMMHYKLGATLELTPLRKRRKEKSLGDEEEPPAFGSPGPSETAHNRPLGSTKSPAEASKSAPSLEGPTSFQPRTPKPGAGSEPGKERRTMSKEISVIQHTSSFEKSDPPEQPSGLEEDKPPAQFSSPPPAPHGRSAHSLQPRLVRQPNIQVPEILVTEEPDRPDTEPEPPPKEPEKTEEFQWPQRSQTLAQLPAEKLPPKKKRLRLAEMAQSSGESSFESSVPLSRSPSQESSISLSGSSRSASFDREDHGKAEAPGPFSDTRSKTLGSHMLTVPSHHPHAREMRRSASEQSPNVPHSSHMTETRSKSFDYGSLSPTGPSLAVPAAPPPPAAPPERRKCFLVRQASLNRPPEAELEAVPKGKQESSEEPAASKPSTKSSVPQISVGTTQGGPSGGKSQMQDRPPLGSSPPYTEALQVFQPLGTQLPPPASLFSLQQLLPQEQEQSSEFFPTQAMAGLLSSPYSMPPLPPSLFQAPPLPLQPTVLHPSQLHLPQLLPHAADIPFQQPPSFLPMPCPAPSTLSGYFLPLQSQFALQLPGEIESHLPPVKTSLPPLATGPPGPSSSTEYSSDIQLPPVTPQATSPAPTSAPPLALPACPDAMVSLVVPVRIQTHMPSYGSAMYTTLSQILVTQSPGSPASTALTKYEEPSSKSMTVCEADVYEAEPGPSSISKEQNRGYQTPYLRVPERKGTSLSSEGILSLEGCSSTASGSKRVLSPAGSLELTMETQQQKRVKEEEASKADEKLELVSTCSVVLTSTEDRKKTEKPHVGGQGRSRREAETLSSLSSDVSDPKELSPLSHSTLSHGTAPGSEALKEYAQPSSKAHRRGLPPMSVKKEDPKEQTDLPPLAPPSSLPLSDTSPKPAKLQEGTDSKKVLQFPSLHTTTNVSWCYLNYIKPNHIQHADRRSSVYAGWCISLYNPNLPGVSTKAALSLLRSKQKVSKETYTMATAPHPEAGRLVPSNSRKPRMTEVHLPSLVSPESQKDPARVEKEEKQGKAEEGTPTSKRGEPARVKIFEGGYKSNEEYIYVRGRGRGRYVCEECGIRCKKPSMLKKHIRTHTDVRPYVCKHCHFAFKTKGNLTKHMKSKAHSKKCQETGVLEELEAEEGTSDDLHQDSEGQEGAEAVEEHQFSDLEDSDSDSDLDEDEEEEEEEEESQDELSGPCSEAAPPCLPPTLQENSSPVEGPQAPDSTSDEVPQGSSISEATHLTASSCSTPSRGTQGLPRLGLAPLEKDMSSAPSPKATSPRRPWSPSKEAGSRPSLTRKHSLTKNDSSPQQCSPAREAQASVTSTPGPQMGPGRDLGPHLCGSPRLELSCLTPYPIGREAPAGLERATDTGTPRYSPTRRWSLGQAESPPQTVLPGKWALAGPCSPSADKSGLGLGPVPRALLQPVPLPHTLLSRSPETCTSAWRKTESRSPSAGPAPLFPRPFSAPHDFHGHLPSRSEENLFSHLPLHSQLLSRAPCPLIPIGGIQMVQARPGAQPTVLPGPCAAWVSGFSGGGSDLTGAREAQERSRWSPTESPSASVSPVAKVSKFTLSSELEEERTGRGPGRPPDWEPHRAEAPPGPMGTHSPCSPQLPQGHQVAPSWRGLLGSPHTLANLKASSFPPLDRSSSMDCLAETSTYSPPRSRNLSGEPRTRQGSPELLGRGELRTPLFLPKGSGPPSI</sequence>
<dbReference type="EMBL" id="AL607142">
    <property type="status" value="NOT_ANNOTATED_CDS"/>
    <property type="molecule type" value="Genomic_DNA"/>
</dbReference>
<dbReference type="EMBL" id="AY454345">
    <property type="protein sequence ID" value="AAR88090.1"/>
    <property type="status" value="ALT_FRAME"/>
    <property type="molecule type" value="mRNA"/>
</dbReference>
<dbReference type="EMBL" id="AK173200">
    <property type="protein sequence ID" value="BAD32478.1"/>
    <property type="molecule type" value="mRNA"/>
</dbReference>
<dbReference type="EMBL" id="L07911">
    <property type="protein sequence ID" value="AAA40039.1"/>
    <property type="status" value="ALT_SEQ"/>
    <property type="molecule type" value="mRNA"/>
</dbReference>
<dbReference type="CCDS" id="CCDS38863.1"/>
<dbReference type="PIR" id="S41479">
    <property type="entry name" value="S41479"/>
</dbReference>
<dbReference type="PIR" id="T42717">
    <property type="entry name" value="T42717"/>
</dbReference>
<dbReference type="RefSeq" id="NP_034787.2">
    <property type="nucleotide sequence ID" value="NM_010657.3"/>
</dbReference>
<dbReference type="RefSeq" id="XP_006502878.1">
    <property type="nucleotide sequence ID" value="XM_006502815.4"/>
</dbReference>
<dbReference type="RefSeq" id="XP_006502879.1">
    <property type="nucleotide sequence ID" value="XM_006502816.2"/>
</dbReference>
<dbReference type="RefSeq" id="XP_006502880.1">
    <property type="nucleotide sequence ID" value="XM_006502817.4"/>
</dbReference>
<dbReference type="RefSeq" id="XP_011238754.1">
    <property type="nucleotide sequence ID" value="XM_011240452.3"/>
</dbReference>
<dbReference type="RefSeq" id="XP_011238755.1">
    <property type="nucleotide sequence ID" value="XM_011240453.3"/>
</dbReference>
<dbReference type="RefSeq" id="XP_036019642.1">
    <property type="nucleotide sequence ID" value="XM_036163749.1"/>
</dbReference>
<dbReference type="SMR" id="A2A884"/>
<dbReference type="BioGRID" id="201013">
    <property type="interactions" value="1"/>
</dbReference>
<dbReference type="FunCoup" id="A2A884">
    <property type="interactions" value="1608"/>
</dbReference>
<dbReference type="IntAct" id="A2A884">
    <property type="interactions" value="1"/>
</dbReference>
<dbReference type="MINT" id="A2A884"/>
<dbReference type="STRING" id="10090.ENSMUSP00000101914"/>
<dbReference type="GlyGen" id="A2A884">
    <property type="glycosylation" value="3 sites, 1 O-linked glycan (1 site)"/>
</dbReference>
<dbReference type="iPTMnet" id="A2A884"/>
<dbReference type="PhosphoSitePlus" id="A2A884"/>
<dbReference type="jPOST" id="A2A884"/>
<dbReference type="PaxDb" id="10090-ENSMUSP00000101914"/>
<dbReference type="PeptideAtlas" id="A2A884"/>
<dbReference type="ProteomicsDB" id="275143"/>
<dbReference type="Pumba" id="A2A884"/>
<dbReference type="Antibodypedia" id="32189">
    <property type="antibodies" value="25 antibodies from 9 providers"/>
</dbReference>
<dbReference type="DNASU" id="16656"/>
<dbReference type="Ensembl" id="ENSMUST00000106307.9">
    <property type="protein sequence ID" value="ENSMUSP00000101914.3"/>
    <property type="gene ID" value="ENSMUSG00000028634.18"/>
</dbReference>
<dbReference type="Ensembl" id="ENSMUST00000166542.3">
    <property type="protein sequence ID" value="ENSMUSP00000130249.3"/>
    <property type="gene ID" value="ENSMUSG00000028634.18"/>
</dbReference>
<dbReference type="GeneID" id="16656"/>
<dbReference type="KEGG" id="mmu:16656"/>
<dbReference type="UCSC" id="uc008una.1">
    <property type="organism name" value="mouse"/>
</dbReference>
<dbReference type="AGR" id="MGI:106589"/>
<dbReference type="CTD" id="59269"/>
<dbReference type="MGI" id="MGI:106589">
    <property type="gene designation" value="Hivep3"/>
</dbReference>
<dbReference type="VEuPathDB" id="HostDB:ENSMUSG00000028634"/>
<dbReference type="eggNOG" id="KOG1721">
    <property type="taxonomic scope" value="Eukaryota"/>
</dbReference>
<dbReference type="GeneTree" id="ENSGT00940000157218"/>
<dbReference type="HOGENOM" id="CLU_000719_1_0_1"/>
<dbReference type="InParanoid" id="A2A884"/>
<dbReference type="OMA" id="EDRGPPN"/>
<dbReference type="OrthoDB" id="10042249at2759"/>
<dbReference type="PhylomeDB" id="A2A884"/>
<dbReference type="TreeFam" id="TF331837"/>
<dbReference type="BioGRID-ORCS" id="16656">
    <property type="hits" value="3 hits in 78 CRISPR screens"/>
</dbReference>
<dbReference type="ChiTaRS" id="Hivep3">
    <property type="organism name" value="mouse"/>
</dbReference>
<dbReference type="PRO" id="PR:A2A884"/>
<dbReference type="Proteomes" id="UP000000589">
    <property type="component" value="Chromosome 4"/>
</dbReference>
<dbReference type="RNAct" id="A2A884">
    <property type="molecule type" value="protein"/>
</dbReference>
<dbReference type="Bgee" id="ENSMUSG00000028634">
    <property type="expression patterns" value="Expressed in gastrula and 210 other cell types or tissues"/>
</dbReference>
<dbReference type="ExpressionAtlas" id="A2A884">
    <property type="expression patterns" value="baseline and differential"/>
</dbReference>
<dbReference type="GO" id="GO:0005829">
    <property type="term" value="C:cytosol"/>
    <property type="evidence" value="ECO:0000304"/>
    <property type="project" value="Reactome"/>
</dbReference>
<dbReference type="GO" id="GO:0005634">
    <property type="term" value="C:nucleus"/>
    <property type="evidence" value="ECO:0000314"/>
    <property type="project" value="MGI"/>
</dbReference>
<dbReference type="GO" id="GO:0003677">
    <property type="term" value="F:DNA binding"/>
    <property type="evidence" value="ECO:0000314"/>
    <property type="project" value="MGI"/>
</dbReference>
<dbReference type="GO" id="GO:0008270">
    <property type="term" value="F:zinc ion binding"/>
    <property type="evidence" value="ECO:0007669"/>
    <property type="project" value="UniProtKB-KW"/>
</dbReference>
<dbReference type="GO" id="GO:0045893">
    <property type="term" value="P:positive regulation of DNA-templated transcription"/>
    <property type="evidence" value="ECO:0000266"/>
    <property type="project" value="MGI"/>
</dbReference>
<dbReference type="GO" id="GO:0035914">
    <property type="term" value="P:skeletal muscle cell differentiation"/>
    <property type="evidence" value="ECO:0000315"/>
    <property type="project" value="MGI"/>
</dbReference>
<dbReference type="FunFam" id="3.30.160.60:FF:000033">
    <property type="entry name" value="Immunodeficiency virus type I enhancer binding protein 1"/>
    <property type="match status" value="1"/>
</dbReference>
<dbReference type="FunFam" id="3.30.160.60:FF:000594">
    <property type="entry name" value="Transcription factor HIVEP2"/>
    <property type="match status" value="1"/>
</dbReference>
<dbReference type="FunFam" id="3.30.160.60:FF:000145">
    <property type="entry name" value="Zinc finger protein 574"/>
    <property type="match status" value="1"/>
</dbReference>
<dbReference type="Gene3D" id="3.30.160.60">
    <property type="entry name" value="Classic Zinc Finger"/>
    <property type="match status" value="4"/>
</dbReference>
<dbReference type="InterPro" id="IPR034729">
    <property type="entry name" value="ZF_CCHC_HIVEP"/>
</dbReference>
<dbReference type="InterPro" id="IPR051969">
    <property type="entry name" value="Zinc-finger_DNA-bd_regulators"/>
</dbReference>
<dbReference type="InterPro" id="IPR036236">
    <property type="entry name" value="Znf_C2H2_sf"/>
</dbReference>
<dbReference type="InterPro" id="IPR013087">
    <property type="entry name" value="Znf_C2H2_type"/>
</dbReference>
<dbReference type="PANTHER" id="PTHR45944">
    <property type="entry name" value="SCHNURRI, ISOFORM F"/>
    <property type="match status" value="1"/>
</dbReference>
<dbReference type="PANTHER" id="PTHR45944:SF5">
    <property type="entry name" value="TRANSCRIPTION FACTOR HIVEP3"/>
    <property type="match status" value="1"/>
</dbReference>
<dbReference type="Pfam" id="PF00096">
    <property type="entry name" value="zf-C2H2"/>
    <property type="match status" value="3"/>
</dbReference>
<dbReference type="SMART" id="SM00355">
    <property type="entry name" value="ZnF_C2H2"/>
    <property type="match status" value="5"/>
</dbReference>
<dbReference type="SUPFAM" id="SSF57667">
    <property type="entry name" value="beta-beta-alpha zinc fingers"/>
    <property type="match status" value="3"/>
</dbReference>
<dbReference type="PROSITE" id="PS51811">
    <property type="entry name" value="ZF_CCHC_HIVEP"/>
    <property type="match status" value="1"/>
</dbReference>
<dbReference type="PROSITE" id="PS00028">
    <property type="entry name" value="ZINC_FINGER_C2H2_1"/>
    <property type="match status" value="4"/>
</dbReference>
<dbReference type="PROSITE" id="PS50157">
    <property type="entry name" value="ZINC_FINGER_C2H2_2"/>
    <property type="match status" value="4"/>
</dbReference>
<gene>
    <name type="primary">Hivep3</name>
    <name type="synonym">KBP1</name>
    <name type="synonym">Kiaa1555</name>
    <name type="synonym">Krc</name>
    <name type="synonym">Rc</name>
    <name type="synonym">shn3</name>
    <name type="synonym">Zas3</name>
</gene>
<evidence type="ECO:0000255" key="1"/>
<evidence type="ECO:0000255" key="2">
    <source>
        <dbReference type="PROSITE-ProRule" id="PRU00042"/>
    </source>
</evidence>
<evidence type="ECO:0000255" key="3">
    <source>
        <dbReference type="PROSITE-ProRule" id="PRU01154"/>
    </source>
</evidence>
<evidence type="ECO:0000256" key="4">
    <source>
        <dbReference type="SAM" id="MobiDB-lite"/>
    </source>
</evidence>
<evidence type="ECO:0000269" key="5">
    <source>
    </source>
</evidence>
<evidence type="ECO:0000269" key="6">
    <source>
    </source>
</evidence>
<evidence type="ECO:0000269" key="7">
    <source>
    </source>
</evidence>
<evidence type="ECO:0000269" key="8">
    <source>
    </source>
</evidence>
<evidence type="ECO:0000269" key="9">
    <source>
    </source>
</evidence>
<evidence type="ECO:0000269" key="10">
    <source>
    </source>
</evidence>
<evidence type="ECO:0000269" key="11">
    <source>
    </source>
</evidence>
<evidence type="ECO:0000269" key="12">
    <source>
    </source>
</evidence>
<evidence type="ECO:0000269" key="13">
    <source>
    </source>
</evidence>
<evidence type="ECO:0000269" key="14">
    <source>
    </source>
</evidence>
<evidence type="ECO:0000269" key="15">
    <source>
    </source>
</evidence>
<evidence type="ECO:0000305" key="16"/>
<organism>
    <name type="scientific">Mus musculus</name>
    <name type="common">Mouse</name>
    <dbReference type="NCBI Taxonomy" id="10090"/>
    <lineage>
        <taxon>Eukaryota</taxon>
        <taxon>Metazoa</taxon>
        <taxon>Chordata</taxon>
        <taxon>Craniata</taxon>
        <taxon>Vertebrata</taxon>
        <taxon>Euteleostomi</taxon>
        <taxon>Mammalia</taxon>
        <taxon>Eutheria</taxon>
        <taxon>Euarchontoglires</taxon>
        <taxon>Glires</taxon>
        <taxon>Rodentia</taxon>
        <taxon>Myomorpha</taxon>
        <taxon>Muroidea</taxon>
        <taxon>Muridae</taxon>
        <taxon>Murinae</taxon>
        <taxon>Mus</taxon>
        <taxon>Mus</taxon>
    </lineage>
</organism>
<proteinExistence type="evidence at protein level"/>
<feature type="chain" id="PRO_0000331628" description="Transcription factor HIVEP3">
    <location>
        <begin position="1"/>
        <end position="2348"/>
    </location>
</feature>
<feature type="repeat" description="1" evidence="13">
    <location>
        <begin position="1897"/>
        <end position="1900"/>
    </location>
</feature>
<feature type="repeat" description="2" evidence="13">
    <location>
        <begin position="1927"/>
        <end position="1930"/>
    </location>
</feature>
<feature type="repeat" description="3" evidence="13">
    <location>
        <begin position="1933"/>
        <end position="1936"/>
    </location>
</feature>
<feature type="repeat" description="4" evidence="13">
    <location>
        <begin position="1961"/>
        <end position="1964"/>
    </location>
</feature>
<feature type="repeat" description="5" evidence="13">
    <location>
        <begin position="2024"/>
        <end position="2027"/>
    </location>
</feature>
<feature type="zinc finger region" description="C2H2-type 1" evidence="2">
    <location>
        <begin position="185"/>
        <end position="207"/>
    </location>
</feature>
<feature type="zinc finger region" description="C2H2-type 2" evidence="2">
    <location>
        <begin position="213"/>
        <end position="235"/>
    </location>
</feature>
<feature type="zinc finger region" description="CCHC HIVEP-type" evidence="3">
    <location>
        <begin position="633"/>
        <end position="663"/>
    </location>
</feature>
<feature type="zinc finger region" description="C2H2-type 3" evidence="2">
    <location>
        <begin position="1720"/>
        <end position="1742"/>
    </location>
</feature>
<feature type="zinc finger region" description="C2H2-type 4" evidence="2">
    <location>
        <begin position="1748"/>
        <end position="1772"/>
    </location>
</feature>
<feature type="region of interest" description="Disordered" evidence="4">
    <location>
        <begin position="1"/>
        <end position="105"/>
    </location>
</feature>
<feature type="region of interest" description="ZAS1">
    <location>
        <begin position="185"/>
        <end position="235"/>
    </location>
</feature>
<feature type="region of interest" description="No DNA binding activity or transactivation activity, but complete prevention of TRAF-dependent NF-Kappa-B activation; associates with TRAF2 and JUN">
    <location>
        <begin position="204"/>
        <end position="1055"/>
    </location>
</feature>
<feature type="region of interest" description="Disordered" evidence="4">
    <location>
        <begin position="239"/>
        <end position="401"/>
    </location>
</feature>
<feature type="region of interest" description="Acidic 1">
    <location>
        <begin position="257"/>
        <end position="280"/>
    </location>
</feature>
<feature type="region of interest" description="Disordered" evidence="4">
    <location>
        <begin position="475"/>
        <end position="532"/>
    </location>
</feature>
<feature type="region of interest" description="Disordered" evidence="4">
    <location>
        <begin position="561"/>
        <end position="628"/>
    </location>
</feature>
<feature type="region of interest" description="Disordered" evidence="4">
    <location>
        <begin position="692"/>
        <end position="1098"/>
    </location>
</feature>
<feature type="region of interest" description="Acidic 2">
    <location>
        <begin position="844"/>
        <end position="865"/>
    </location>
</feature>
<feature type="region of interest" description="Disordered" evidence="4">
    <location>
        <begin position="1229"/>
        <end position="1274"/>
    </location>
</feature>
<feature type="region of interest" description="Disordered" evidence="4">
    <location>
        <begin position="1386"/>
        <end position="1427"/>
    </location>
</feature>
<feature type="region of interest" description="Disordered" evidence="4">
    <location>
        <begin position="1441"/>
        <end position="1555"/>
    </location>
</feature>
<feature type="region of interest" description="Disordered" evidence="4">
    <location>
        <begin position="1654"/>
        <end position="1694"/>
    </location>
</feature>
<feature type="region of interest" description="ZAS2">
    <location>
        <begin position="1720"/>
        <end position="1772"/>
    </location>
</feature>
<feature type="region of interest" description="Acidic 3">
    <location>
        <begin position="1783"/>
        <end position="1841"/>
    </location>
</feature>
<feature type="region of interest" description="Disordered" evidence="4">
    <location>
        <begin position="1786"/>
        <end position="1990"/>
    </location>
</feature>
<feature type="region of interest" description="Disordered" evidence="4">
    <location>
        <begin position="2009"/>
        <end position="2038"/>
    </location>
</feature>
<feature type="region of interest" description="5 X 4 AA tandem repeats of [ST]-P-X-[RK]">
    <location>
        <begin position="2053"/>
        <end position="2148"/>
    </location>
</feature>
<feature type="region of interest" description="Disordered" evidence="4">
    <location>
        <begin position="2184"/>
        <end position="2265"/>
    </location>
</feature>
<feature type="region of interest" description="Disordered" evidence="4">
    <location>
        <begin position="2284"/>
        <end position="2348"/>
    </location>
</feature>
<feature type="coiled-coil region" evidence="1">
    <location>
        <begin position="1409"/>
        <end position="1433"/>
    </location>
</feature>
<feature type="short sequence motif" description="Nuclear localization signal" evidence="1">
    <location>
        <begin position="885"/>
        <end position="891"/>
    </location>
</feature>
<feature type="compositionally biased region" description="Polar residues" evidence="4">
    <location>
        <begin position="27"/>
        <end position="72"/>
    </location>
</feature>
<feature type="compositionally biased region" description="Acidic residues" evidence="4">
    <location>
        <begin position="264"/>
        <end position="281"/>
    </location>
</feature>
<feature type="compositionally biased region" description="Low complexity" evidence="4">
    <location>
        <begin position="298"/>
        <end position="323"/>
    </location>
</feature>
<feature type="compositionally biased region" description="Basic and acidic residues" evidence="4">
    <location>
        <begin position="338"/>
        <end position="352"/>
    </location>
</feature>
<feature type="compositionally biased region" description="Polar residues" evidence="4">
    <location>
        <begin position="372"/>
        <end position="401"/>
    </location>
</feature>
<feature type="compositionally biased region" description="Polar residues" evidence="4">
    <location>
        <begin position="485"/>
        <end position="495"/>
    </location>
</feature>
<feature type="compositionally biased region" description="Low complexity" evidence="4">
    <location>
        <begin position="513"/>
        <end position="527"/>
    </location>
</feature>
<feature type="compositionally biased region" description="Low complexity" evidence="4">
    <location>
        <begin position="589"/>
        <end position="605"/>
    </location>
</feature>
<feature type="compositionally biased region" description="Basic and acidic residues" evidence="4">
    <location>
        <begin position="606"/>
        <end position="623"/>
    </location>
</feature>
<feature type="compositionally biased region" description="Low complexity" evidence="4">
    <location>
        <begin position="736"/>
        <end position="749"/>
    </location>
</feature>
<feature type="compositionally biased region" description="Basic and acidic residues" evidence="4">
    <location>
        <begin position="845"/>
        <end position="865"/>
    </location>
</feature>
<feature type="compositionally biased region" description="Low complexity" evidence="4">
    <location>
        <begin position="893"/>
        <end position="929"/>
    </location>
</feature>
<feature type="compositionally biased region" description="Basic and acidic residues" evidence="4">
    <location>
        <begin position="930"/>
        <end position="939"/>
    </location>
</feature>
<feature type="compositionally biased region" description="Polar residues" evidence="4">
    <location>
        <begin position="975"/>
        <end position="985"/>
    </location>
</feature>
<feature type="compositionally biased region" description="Polar residues" evidence="4">
    <location>
        <begin position="1062"/>
        <end position="1073"/>
    </location>
</feature>
<feature type="compositionally biased region" description="Polar residues" evidence="4">
    <location>
        <begin position="1247"/>
        <end position="1256"/>
    </location>
</feature>
<feature type="compositionally biased region" description="Basic and acidic residues" evidence="4">
    <location>
        <begin position="1416"/>
        <end position="1427"/>
    </location>
</feature>
<feature type="compositionally biased region" description="Basic and acidic residues" evidence="4">
    <location>
        <begin position="1442"/>
        <end position="1452"/>
    </location>
</feature>
<feature type="compositionally biased region" description="Basic and acidic residues" evidence="4">
    <location>
        <begin position="1518"/>
        <end position="1527"/>
    </location>
</feature>
<feature type="compositionally biased region" description="Low complexity" evidence="4">
    <location>
        <begin position="1538"/>
        <end position="1547"/>
    </location>
</feature>
<feature type="compositionally biased region" description="Basic and acidic residues" evidence="4">
    <location>
        <begin position="1665"/>
        <end position="1694"/>
    </location>
</feature>
<feature type="compositionally biased region" description="Acidic residues" evidence="4">
    <location>
        <begin position="1815"/>
        <end position="1840"/>
    </location>
</feature>
<feature type="compositionally biased region" description="Polar residues" evidence="4">
    <location>
        <begin position="1871"/>
        <end position="1902"/>
    </location>
</feature>
<feature type="compositionally biased region" description="Polar residues" evidence="4">
    <location>
        <begin position="1952"/>
        <end position="1961"/>
    </location>
</feature>
<feature type="compositionally biased region" description="Low complexity" evidence="4">
    <location>
        <begin position="2203"/>
        <end position="2216"/>
    </location>
</feature>
<feature type="compositionally biased region" description="Polar residues" evidence="4">
    <location>
        <begin position="2293"/>
        <end position="2314"/>
    </location>
</feature>
<feature type="sequence conflict" description="In Ref. 2; AAR88090." evidence="16" ref="2">
    <original>L</original>
    <variation>S</variation>
    <location>
        <position position="131"/>
    </location>
</feature>
<feature type="sequence conflict" description="In Ref. 2; AAR88090." evidence="16" ref="2">
    <original>QP</original>
    <variation>HA</variation>
    <location>
        <begin position="583"/>
        <end position="584"/>
    </location>
</feature>
<feature type="sequence conflict" description="In Ref. 2; AAR88090." evidence="16" ref="2">
    <original>GS</original>
    <variation>AC</variation>
    <location>
        <begin position="721"/>
        <end position="722"/>
    </location>
</feature>
<feature type="sequence conflict" description="In Ref. 2; AAR88090." evidence="16" ref="2">
    <original>S</original>
    <variation>T</variation>
    <location>
        <position position="872"/>
    </location>
</feature>
<feature type="sequence conflict" description="In Ref. 2; AAR88090." evidence="16" ref="2">
    <original>E</original>
    <variation>Q</variation>
    <location>
        <position position="1129"/>
    </location>
</feature>
<feature type="sequence conflict" description="In Ref. 4; AAA40039." evidence="16" ref="4">
    <original>K</original>
    <variation>F</variation>
    <location>
        <position position="1507"/>
    </location>
</feature>
<feature type="sequence conflict" description="In Ref. 2; AAR88090 and 4; AAA40039." evidence="16" ref="2 4">
    <original>L</original>
    <variation>V</variation>
    <location>
        <position position="1660"/>
    </location>
</feature>
<feature type="sequence conflict" description="In Ref. 2; AAR88090 and 4; AAA40039." evidence="16" ref="2 4">
    <original>Q</original>
    <variation>E</variation>
    <location>
        <position position="1880"/>
    </location>
</feature>
<feature type="sequence conflict" description="In Ref. 2; AAR88090 and 4; AAA40039." evidence="16" ref="2 4">
    <original>L</original>
    <variation>V</variation>
    <location>
        <position position="1944"/>
    </location>
</feature>
<feature type="sequence conflict" description="In Ref. 2; AAR88090 and 4; AAA40039." evidence="16" ref="2 4">
    <original>L</original>
    <variation>P</variation>
    <location>
        <position position="1994"/>
    </location>
</feature>
<feature type="sequence conflict" description="In Ref. 2; AAR88090 and 4; AAA40039." evidence="16" ref="2 4">
    <original>C</original>
    <variation>R</variation>
    <location>
        <position position="1998"/>
    </location>
</feature>
<feature type="sequence conflict" description="In Ref. 4; AAA40039." evidence="16" ref="4">
    <original>R</original>
    <variation>P</variation>
    <location>
        <position position="2014"/>
    </location>
</feature>
<feature type="sequence conflict" description="In Ref. 2; AAR88090 and 4; AAA40039." evidence="16" ref="2 4">
    <original>A</original>
    <variation>G</variation>
    <location>
        <position position="2105"/>
    </location>
</feature>
<comment type="function">
    <text evidence="5 6 7 8 9 10 11 13 14">Plays a role of transcription factor; binds to recognition signal sequences (Rss heptamer) for somatic recombination of immunoglobulin and T-cell receptor gene segments; Also binds to the kappa-B motif of gene such as S100A4, involved in cell progression and differentiation. Kappa-B motif is a gene regulatory element found in promoters and enhancers of genes involved in immunity, inflammation, and growth and that responds to viral antigens, mitogens, and cytokines. Involvement of HIVEP3 in cell growth is strengthened by the fact that its down-regulation promotes cell cycle progression with ultimate formation of multinucleated giant cells. Strongly inhibits TNF-alpha-induced NF-kappa-B activation; Interferes with nuclear factor NF-kappa-B by several mechanisms: as transcription factor, by competing for Kappa-B motif and by repressing transcription in the nucleus; through a non transcriptional process, by inhibiting nuclear translocation of RELA by association with TRAF2, an adapter molecule in the tumor necrosis factor signaling, which blocks the formation of IKK complex. Interaction with TRAF proteins inhibits both NF-Kappa-B-mediated and c-Jun N-terminal kinase/JNK-mediated responses that include apoptosis and pro-inflammatory cytokine gene expression. Positively regulates the expression of IL2 in T-cell. Essential regulator of adult bone formation.</text>
</comment>
<comment type="subunit">
    <text evidence="7 11 12">Interacts with TRAF1 and TRAF2 as well as with JUN. Forms a multimeric complex with RUNX2 and E3 ubiquitin ligase WWP1.</text>
</comment>
<comment type="subcellular location">
    <subcellularLocation>
        <location evidence="7">Cytoplasm</location>
    </subcellularLocation>
    <subcellularLocation>
        <location evidence="7">Nucleus</location>
    </subcellularLocation>
</comment>
<comment type="tissue specificity">
    <text evidence="10 12 13 14">Expressed in macrophages, lymphocytes, brain, thymus, spleen and bone marrow. Expressed in osteoblasts, whole bone and, to a lesser extent, in osteoclasts.</text>
</comment>
<comment type="developmental stage">
    <text evidence="8 13">Expressed in the thymus with increasing level, approximately 4-fold, from 15.5 dpc to 16.5 dpc, constant level from 16.5 dpc to birth, then decrease to a low level by P30. Expressed at 13.5 dpc in the dorsal root ganglia of the peripheral nervous system and the trigeminal ganglion of the metencephalon and at relatively low levels in the cerebral cortex; no significant expression was observed prior to 13.5 dpc. Expressed in the spinal cord at 19 dpc, but weakly detected in the lung and the liver.</text>
</comment>
<comment type="induction">
    <text evidence="8 11">Upon CD3/CD28 stimulation in CD4 T-cells. Induced by LPS in pre-B-cells.</text>
</comment>
<comment type="domain">
    <text evidence="9 13 14">ZAS2 domain binds DNA as dimers, tetramers, and multiple of tetramers and readily forms highly ordered DNA-protein structures.</text>
</comment>
<comment type="PTM">
    <text evidence="15">Phosphorylated on threonine and serine residues. Phosphorylation by cyclin-dependent kinase CDK1 decreases HIVEP3 DNA binding affinity, and by epidermal growth factor receptor kinase increases its DNA binding affinity.</text>
</comment>
<comment type="disruption phenotype">
    <text evidence="12">Mice display adult-onset osteosclerosis with increased bone mass due to increased osteoblast activity; the osteoblasts contain elevated levels of Runx2.</text>
</comment>
<comment type="miscellaneous">
    <text>Hivep3 gene expression is probably controlled by a combination of differential promoter usage, alternative splicing, and possible intergenic splicing.</text>
</comment>
<comment type="sequence caution" evidence="16">
    <conflict type="erroneous initiation">
        <sequence resource="EMBL-CDS" id="AAA40039"/>
    </conflict>
    <text>Truncated N-terminus.</text>
</comment>
<comment type="sequence caution" evidence="16">
    <conflict type="frameshift">
        <sequence resource="EMBL-CDS" id="AAA40039"/>
    </conflict>
</comment>
<comment type="sequence caution" evidence="16">
    <conflict type="frameshift">
        <sequence resource="EMBL-CDS" id="AAR88090"/>
    </conflict>
</comment>
<name>ZEP3_MOUSE</name>